<name>PURK_MYCLE</name>
<comment type="function">
    <text evidence="1">Catalyzes the ATP-dependent conversion of 5-aminoimidazole ribonucleotide (AIR) and HCO(3)(-) to N5-carboxyaminoimidazole ribonucleotide (N5-CAIR).</text>
</comment>
<comment type="catalytic activity">
    <reaction evidence="1">
        <text>5-amino-1-(5-phospho-beta-D-ribosyl)imidazole + hydrogencarbonate + ATP = 5-carboxyamino-1-(5-phospho-D-ribosyl)imidazole + ADP + phosphate + 2 H(+)</text>
        <dbReference type="Rhea" id="RHEA:19317"/>
        <dbReference type="ChEBI" id="CHEBI:15378"/>
        <dbReference type="ChEBI" id="CHEBI:17544"/>
        <dbReference type="ChEBI" id="CHEBI:30616"/>
        <dbReference type="ChEBI" id="CHEBI:43474"/>
        <dbReference type="ChEBI" id="CHEBI:58730"/>
        <dbReference type="ChEBI" id="CHEBI:137981"/>
        <dbReference type="ChEBI" id="CHEBI:456216"/>
        <dbReference type="EC" id="6.3.4.18"/>
    </reaction>
</comment>
<comment type="pathway">
    <text evidence="1">Purine metabolism; IMP biosynthesis via de novo pathway; 5-amino-1-(5-phospho-D-ribosyl)imidazole-4-carboxylate from 5-amino-1-(5-phospho-D-ribosyl)imidazole (N5-CAIR route): step 1/2.</text>
</comment>
<comment type="subunit">
    <text evidence="1">Homodimer.</text>
</comment>
<comment type="similarity">
    <text evidence="1">Belongs to the PurK/PurT family.</text>
</comment>
<feature type="chain" id="PRO_0000074999" description="N5-carboxyaminoimidazole ribonucleotide synthase">
    <location>
        <begin position="1"/>
        <end position="439"/>
    </location>
</feature>
<feature type="domain" description="ATP-grasp" evidence="1">
    <location>
        <begin position="117"/>
        <end position="313"/>
    </location>
</feature>
<feature type="binding site" evidence="1">
    <location>
        <position position="113"/>
    </location>
    <ligand>
        <name>ATP</name>
        <dbReference type="ChEBI" id="CHEBI:30616"/>
    </ligand>
</feature>
<feature type="binding site" evidence="1">
    <location>
        <position position="160"/>
    </location>
    <ligand>
        <name>ATP</name>
        <dbReference type="ChEBI" id="CHEBI:30616"/>
    </ligand>
</feature>
<feature type="binding site" evidence="1">
    <location>
        <begin position="197"/>
        <end position="200"/>
    </location>
    <ligand>
        <name>ATP</name>
        <dbReference type="ChEBI" id="CHEBI:30616"/>
    </ligand>
</feature>
<feature type="binding site" evidence="1">
    <location>
        <position position="205"/>
    </location>
    <ligand>
        <name>ATP</name>
        <dbReference type="ChEBI" id="CHEBI:30616"/>
    </ligand>
</feature>
<feature type="binding site" evidence="1">
    <location>
        <begin position="283"/>
        <end position="284"/>
    </location>
    <ligand>
        <name>ATP</name>
        <dbReference type="ChEBI" id="CHEBI:30616"/>
    </ligand>
</feature>
<gene>
    <name evidence="1" type="primary">purK</name>
    <name type="ordered locus">ML0735</name>
    <name type="ORF">B1308_F1_32</name>
</gene>
<accession>P46701</accession>
<proteinExistence type="inferred from homology"/>
<evidence type="ECO:0000255" key="1">
    <source>
        <dbReference type="HAMAP-Rule" id="MF_01928"/>
    </source>
</evidence>
<protein>
    <recommendedName>
        <fullName evidence="1">N5-carboxyaminoimidazole ribonucleotide synthase</fullName>
        <shortName evidence="1">N5-CAIR synthase</shortName>
        <ecNumber evidence="1">6.3.4.18</ecNumber>
    </recommendedName>
    <alternativeName>
        <fullName evidence="1">5-(carboxyamino)imidazole ribonucleotide synthetase</fullName>
    </alternativeName>
</protein>
<keyword id="KW-0067">ATP-binding</keyword>
<keyword id="KW-0436">Ligase</keyword>
<keyword id="KW-0547">Nucleotide-binding</keyword>
<keyword id="KW-0658">Purine biosynthesis</keyword>
<keyword id="KW-1185">Reference proteome</keyword>
<reference key="1">
    <citation type="journal article" date="1995" name="Gene">
        <title>Genomic organization of the mycobacterial sigma gene cluster.</title>
        <authorList>
            <person name="Doukhan L."/>
            <person name="Predich M."/>
            <person name="Nair G."/>
            <person name="Dussurget O."/>
            <person name="Mandic-Mulec I."/>
            <person name="Cole S.T."/>
            <person name="Smith D.R."/>
            <person name="Smith I."/>
        </authorList>
    </citation>
    <scope>NUCLEOTIDE SEQUENCE [GENOMIC DNA]</scope>
</reference>
<reference key="2">
    <citation type="journal article" date="2001" name="Nature">
        <title>Massive gene decay in the leprosy bacillus.</title>
        <authorList>
            <person name="Cole S.T."/>
            <person name="Eiglmeier K."/>
            <person name="Parkhill J."/>
            <person name="James K.D."/>
            <person name="Thomson N.R."/>
            <person name="Wheeler P.R."/>
            <person name="Honore N."/>
            <person name="Garnier T."/>
            <person name="Churcher C.M."/>
            <person name="Harris D.E."/>
            <person name="Mungall K.L."/>
            <person name="Basham D."/>
            <person name="Brown D."/>
            <person name="Chillingworth T."/>
            <person name="Connor R."/>
            <person name="Davies R.M."/>
            <person name="Devlin K."/>
            <person name="Duthoy S."/>
            <person name="Feltwell T."/>
            <person name="Fraser A."/>
            <person name="Hamlin N."/>
            <person name="Holroyd S."/>
            <person name="Hornsby T."/>
            <person name="Jagels K."/>
            <person name="Lacroix C."/>
            <person name="Maclean J."/>
            <person name="Moule S."/>
            <person name="Murphy L.D."/>
            <person name="Oliver K."/>
            <person name="Quail M.A."/>
            <person name="Rajandream M.A."/>
            <person name="Rutherford K.M."/>
            <person name="Rutter S."/>
            <person name="Seeger K."/>
            <person name="Simon S."/>
            <person name="Simmonds M."/>
            <person name="Skelton J."/>
            <person name="Squares R."/>
            <person name="Squares S."/>
            <person name="Stevens K."/>
            <person name="Taylor K."/>
            <person name="Whitehead S."/>
            <person name="Woodward J.R."/>
            <person name="Barrell B.G."/>
        </authorList>
    </citation>
    <scope>NUCLEOTIDE SEQUENCE [LARGE SCALE GENOMIC DNA]</scope>
    <source>
        <strain>TN</strain>
    </source>
</reference>
<organism>
    <name type="scientific">Mycobacterium leprae (strain TN)</name>
    <dbReference type="NCBI Taxonomy" id="272631"/>
    <lineage>
        <taxon>Bacteria</taxon>
        <taxon>Bacillati</taxon>
        <taxon>Actinomycetota</taxon>
        <taxon>Actinomycetes</taxon>
        <taxon>Mycobacteriales</taxon>
        <taxon>Mycobacteriaceae</taxon>
        <taxon>Mycobacterium</taxon>
    </lineage>
</organism>
<sequence>MMAVPSRCSLGVAPLVAMVGGGQLARMTHQAAIALGQTLRVLATAADEPAAQVTPDVVIGSHTDLEDLRRVALGADALTFDHEHVPTELLDKLVAEGINVAPSPQALVHAQDKLVMRRRLAALGAAMPRFMALDSVDDLAEIDAFAQRLTGSKDAPMVVKAVRGGYDGRGVQMVRDSAHAREVASGYLVDGMPVLVEERVELRRELSALVARSPFGQGAAWPVVETVQRDGICVLVVAPALALADDLASAAQQLALRLAAELGVVGVFAVELFETADGALLVNELAMRPHNSGHWTMDGARTSQFEQHLRAVLDYPLGETDAVAPVTVMVNVLGAPQPPTLSVVTMDERLHHLFARMPDARVHLYDKVERPGRKVGHINFRGTDKDRKNPTKLRERAELAAHWLSHGQWTDGWDPHRAGDDVVEISLACGGRNDAQRQR</sequence>
<dbReference type="EC" id="6.3.4.18" evidence="1"/>
<dbReference type="EMBL" id="U00012">
    <property type="protein sequence ID" value="AAA85935.1"/>
    <property type="molecule type" value="Genomic_DNA"/>
</dbReference>
<dbReference type="EMBL" id="AL583919">
    <property type="protein sequence ID" value="CAC30244.1"/>
    <property type="molecule type" value="Genomic_DNA"/>
</dbReference>
<dbReference type="PIR" id="H87000">
    <property type="entry name" value="H87000"/>
</dbReference>
<dbReference type="RefSeq" id="NP_301575.1">
    <property type="nucleotide sequence ID" value="NC_002677.1"/>
</dbReference>
<dbReference type="RefSeq" id="WP_010907899.1">
    <property type="nucleotide sequence ID" value="NC_002677.1"/>
</dbReference>
<dbReference type="SMR" id="P46701"/>
<dbReference type="STRING" id="272631.gene:17574559"/>
<dbReference type="KEGG" id="mle:ML0735"/>
<dbReference type="PATRIC" id="fig|272631.5.peg.1332"/>
<dbReference type="Leproma" id="ML0735"/>
<dbReference type="eggNOG" id="COG0026">
    <property type="taxonomic scope" value="Bacteria"/>
</dbReference>
<dbReference type="HOGENOM" id="CLU_011534_0_2_11"/>
<dbReference type="OrthoDB" id="9804625at2"/>
<dbReference type="UniPathway" id="UPA00074">
    <property type="reaction ID" value="UER00942"/>
</dbReference>
<dbReference type="Proteomes" id="UP000000806">
    <property type="component" value="Chromosome"/>
</dbReference>
<dbReference type="GO" id="GO:0005829">
    <property type="term" value="C:cytosol"/>
    <property type="evidence" value="ECO:0007669"/>
    <property type="project" value="TreeGrafter"/>
</dbReference>
<dbReference type="GO" id="GO:0034028">
    <property type="term" value="F:5-(carboxyamino)imidazole ribonucleotide synthase activity"/>
    <property type="evidence" value="ECO:0007669"/>
    <property type="project" value="UniProtKB-UniRule"/>
</dbReference>
<dbReference type="GO" id="GO:0005524">
    <property type="term" value="F:ATP binding"/>
    <property type="evidence" value="ECO:0007669"/>
    <property type="project" value="UniProtKB-KW"/>
</dbReference>
<dbReference type="GO" id="GO:0046872">
    <property type="term" value="F:metal ion binding"/>
    <property type="evidence" value="ECO:0007669"/>
    <property type="project" value="InterPro"/>
</dbReference>
<dbReference type="GO" id="GO:0004638">
    <property type="term" value="F:phosphoribosylaminoimidazole carboxylase activity"/>
    <property type="evidence" value="ECO:0007669"/>
    <property type="project" value="InterPro"/>
</dbReference>
<dbReference type="GO" id="GO:0006189">
    <property type="term" value="P:'de novo' IMP biosynthetic process"/>
    <property type="evidence" value="ECO:0007669"/>
    <property type="project" value="UniProtKB-UniRule"/>
</dbReference>
<dbReference type="FunFam" id="3.30.470.20:FF:000029">
    <property type="entry name" value="N5-carboxyaminoimidazole ribonucleotide synthase"/>
    <property type="match status" value="1"/>
</dbReference>
<dbReference type="FunFam" id="3.40.50.20:FF:000025">
    <property type="entry name" value="N5-carboxyaminoimidazole ribonucleotide synthase"/>
    <property type="match status" value="1"/>
</dbReference>
<dbReference type="Gene3D" id="3.40.50.20">
    <property type="match status" value="1"/>
</dbReference>
<dbReference type="Gene3D" id="3.30.1490.20">
    <property type="entry name" value="ATP-grasp fold, A domain"/>
    <property type="match status" value="1"/>
</dbReference>
<dbReference type="Gene3D" id="3.30.470.20">
    <property type="entry name" value="ATP-grasp fold, B domain"/>
    <property type="match status" value="1"/>
</dbReference>
<dbReference type="HAMAP" id="MF_01928">
    <property type="entry name" value="PurK"/>
    <property type="match status" value="1"/>
</dbReference>
<dbReference type="InterPro" id="IPR011761">
    <property type="entry name" value="ATP-grasp"/>
</dbReference>
<dbReference type="InterPro" id="IPR003135">
    <property type="entry name" value="ATP-grasp_carboxylate-amine"/>
</dbReference>
<dbReference type="InterPro" id="IPR013815">
    <property type="entry name" value="ATP_grasp_subdomain_1"/>
</dbReference>
<dbReference type="InterPro" id="IPR016185">
    <property type="entry name" value="PreATP-grasp_dom_sf"/>
</dbReference>
<dbReference type="InterPro" id="IPR005875">
    <property type="entry name" value="PurK"/>
</dbReference>
<dbReference type="InterPro" id="IPR040686">
    <property type="entry name" value="PurK_C"/>
</dbReference>
<dbReference type="InterPro" id="IPR054350">
    <property type="entry name" value="PurT/PurK_preATP-grasp"/>
</dbReference>
<dbReference type="InterPro" id="IPR011054">
    <property type="entry name" value="Rudment_hybrid_motif"/>
</dbReference>
<dbReference type="NCBIfam" id="NF004679">
    <property type="entry name" value="PRK06019.1-5"/>
    <property type="match status" value="1"/>
</dbReference>
<dbReference type="NCBIfam" id="NF004680">
    <property type="entry name" value="PRK06019.1-6"/>
    <property type="match status" value="1"/>
</dbReference>
<dbReference type="NCBIfam" id="TIGR01161">
    <property type="entry name" value="purK"/>
    <property type="match status" value="1"/>
</dbReference>
<dbReference type="PANTHER" id="PTHR11609:SF5">
    <property type="entry name" value="PHOSPHORIBOSYLAMINOIMIDAZOLE CARBOXYLASE"/>
    <property type="match status" value="1"/>
</dbReference>
<dbReference type="PANTHER" id="PTHR11609">
    <property type="entry name" value="PURINE BIOSYNTHESIS PROTEIN 6/7, PUR6/7"/>
    <property type="match status" value="1"/>
</dbReference>
<dbReference type="Pfam" id="PF02222">
    <property type="entry name" value="ATP-grasp"/>
    <property type="match status" value="1"/>
</dbReference>
<dbReference type="Pfam" id="PF17769">
    <property type="entry name" value="PurK_C"/>
    <property type="match status" value="1"/>
</dbReference>
<dbReference type="Pfam" id="PF22660">
    <property type="entry name" value="RS_preATP-grasp-like"/>
    <property type="match status" value="1"/>
</dbReference>
<dbReference type="SUPFAM" id="SSF56059">
    <property type="entry name" value="Glutathione synthetase ATP-binding domain-like"/>
    <property type="match status" value="1"/>
</dbReference>
<dbReference type="SUPFAM" id="SSF52440">
    <property type="entry name" value="PreATP-grasp domain"/>
    <property type="match status" value="1"/>
</dbReference>
<dbReference type="SUPFAM" id="SSF51246">
    <property type="entry name" value="Rudiment single hybrid motif"/>
    <property type="match status" value="1"/>
</dbReference>
<dbReference type="PROSITE" id="PS50975">
    <property type="entry name" value="ATP_GRASP"/>
    <property type="match status" value="1"/>
</dbReference>